<proteinExistence type="inferred from homology"/>
<comment type="function">
    <text evidence="1">Bidirectionally degrades single-stranded DNA into large acid-insoluble oligonucleotides, which are then degraded further into small acid-soluble oligonucleotides.</text>
</comment>
<comment type="catalytic activity">
    <reaction evidence="1">
        <text>Exonucleolytic cleavage in either 5'- to 3'- or 3'- to 5'-direction to yield nucleoside 5'-phosphates.</text>
        <dbReference type="EC" id="3.1.11.6"/>
    </reaction>
</comment>
<comment type="subunit">
    <text evidence="1">Heterooligomer composed of large and small subunits.</text>
</comment>
<comment type="subcellular location">
    <subcellularLocation>
        <location evidence="1">Cytoplasm</location>
    </subcellularLocation>
</comment>
<comment type="similarity">
    <text evidence="1 2">Belongs to the XseB family.</text>
</comment>
<organism>
    <name type="scientific">Lactococcus lactis subsp. lactis (strain IL1403)</name>
    <name type="common">Streptococcus lactis</name>
    <dbReference type="NCBI Taxonomy" id="272623"/>
    <lineage>
        <taxon>Bacteria</taxon>
        <taxon>Bacillati</taxon>
        <taxon>Bacillota</taxon>
        <taxon>Bacilli</taxon>
        <taxon>Lactobacillales</taxon>
        <taxon>Streptococcaceae</taxon>
        <taxon>Lactococcus</taxon>
    </lineage>
</organism>
<gene>
    <name evidence="1" type="primary">xseB</name>
    <name type="ordered locus">LL0855</name>
    <name type="ORF">L0255</name>
</gene>
<accession>Q9CH83</accession>
<protein>
    <recommendedName>
        <fullName evidence="1">Exodeoxyribonuclease 7 small subunit</fullName>
        <ecNumber evidence="1">3.1.11.6</ecNumber>
    </recommendedName>
    <alternativeName>
        <fullName evidence="1">Exodeoxyribonuclease VII small subunit</fullName>
        <shortName evidence="1">Exonuclease VII small subunit</shortName>
    </alternativeName>
</protein>
<evidence type="ECO:0000255" key="1">
    <source>
        <dbReference type="HAMAP-Rule" id="MF_00337"/>
    </source>
</evidence>
<evidence type="ECO:0000305" key="2"/>
<keyword id="KW-0963">Cytoplasm</keyword>
<keyword id="KW-0269">Exonuclease</keyword>
<keyword id="KW-0378">Hydrolase</keyword>
<keyword id="KW-0540">Nuclease</keyword>
<keyword id="KW-1185">Reference proteome</keyword>
<name>EX7S_LACLA</name>
<sequence>MATKKEDVKFEDNLAELENIVRKLESGDVALEDAIAEFQKGMKISETLKKTLNEAEETLVKIVGKNDQESDFSPEQKDY</sequence>
<feature type="chain" id="PRO_0000206959" description="Exodeoxyribonuclease 7 small subunit">
    <location>
        <begin position="1"/>
        <end position="79"/>
    </location>
</feature>
<dbReference type="EC" id="3.1.11.6" evidence="1"/>
<dbReference type="EMBL" id="AE005176">
    <property type="protein sequence ID" value="AAK04953.1"/>
    <property type="molecule type" value="Genomic_DNA"/>
</dbReference>
<dbReference type="PIR" id="G86731">
    <property type="entry name" value="G86731"/>
</dbReference>
<dbReference type="RefSeq" id="NP_267011.1">
    <property type="nucleotide sequence ID" value="NC_002662.1"/>
</dbReference>
<dbReference type="RefSeq" id="WP_003131346.1">
    <property type="nucleotide sequence ID" value="NC_002662.1"/>
</dbReference>
<dbReference type="SMR" id="Q9CH83"/>
<dbReference type="PaxDb" id="272623-L0255"/>
<dbReference type="EnsemblBacteria" id="AAK04953">
    <property type="protein sequence ID" value="AAK04953"/>
    <property type="gene ID" value="L0255"/>
</dbReference>
<dbReference type="KEGG" id="lla:L0255"/>
<dbReference type="PATRIC" id="fig|272623.7.peg.916"/>
<dbReference type="eggNOG" id="COG1722">
    <property type="taxonomic scope" value="Bacteria"/>
</dbReference>
<dbReference type="HOGENOM" id="CLU_145918_3_2_9"/>
<dbReference type="OrthoDB" id="9798666at2"/>
<dbReference type="Proteomes" id="UP000002196">
    <property type="component" value="Chromosome"/>
</dbReference>
<dbReference type="GO" id="GO:0005829">
    <property type="term" value="C:cytosol"/>
    <property type="evidence" value="ECO:0007669"/>
    <property type="project" value="TreeGrafter"/>
</dbReference>
<dbReference type="GO" id="GO:0009318">
    <property type="term" value="C:exodeoxyribonuclease VII complex"/>
    <property type="evidence" value="ECO:0007669"/>
    <property type="project" value="InterPro"/>
</dbReference>
<dbReference type="GO" id="GO:0008855">
    <property type="term" value="F:exodeoxyribonuclease VII activity"/>
    <property type="evidence" value="ECO:0007669"/>
    <property type="project" value="UniProtKB-UniRule"/>
</dbReference>
<dbReference type="GO" id="GO:0006308">
    <property type="term" value="P:DNA catabolic process"/>
    <property type="evidence" value="ECO:0007669"/>
    <property type="project" value="UniProtKB-UniRule"/>
</dbReference>
<dbReference type="Gene3D" id="1.10.287.1040">
    <property type="entry name" value="Exonuclease VII, small subunit"/>
    <property type="match status" value="1"/>
</dbReference>
<dbReference type="HAMAP" id="MF_00337">
    <property type="entry name" value="Exonuc_7_S"/>
    <property type="match status" value="1"/>
</dbReference>
<dbReference type="InterPro" id="IPR003761">
    <property type="entry name" value="Exonuc_VII_S"/>
</dbReference>
<dbReference type="InterPro" id="IPR037004">
    <property type="entry name" value="Exonuc_VII_ssu_sf"/>
</dbReference>
<dbReference type="NCBIfam" id="NF002138">
    <property type="entry name" value="PRK00977.1-2"/>
    <property type="match status" value="1"/>
</dbReference>
<dbReference type="NCBIfam" id="TIGR01280">
    <property type="entry name" value="xseB"/>
    <property type="match status" value="1"/>
</dbReference>
<dbReference type="PANTHER" id="PTHR34137">
    <property type="entry name" value="EXODEOXYRIBONUCLEASE 7 SMALL SUBUNIT"/>
    <property type="match status" value="1"/>
</dbReference>
<dbReference type="PANTHER" id="PTHR34137:SF1">
    <property type="entry name" value="EXODEOXYRIBONUCLEASE 7 SMALL SUBUNIT"/>
    <property type="match status" value="1"/>
</dbReference>
<dbReference type="Pfam" id="PF02609">
    <property type="entry name" value="Exonuc_VII_S"/>
    <property type="match status" value="1"/>
</dbReference>
<dbReference type="PIRSF" id="PIRSF006488">
    <property type="entry name" value="Exonuc_VII_S"/>
    <property type="match status" value="1"/>
</dbReference>
<dbReference type="SUPFAM" id="SSF116842">
    <property type="entry name" value="XseB-like"/>
    <property type="match status" value="1"/>
</dbReference>
<reference key="1">
    <citation type="journal article" date="2001" name="Genome Res.">
        <title>The complete genome sequence of the lactic acid bacterium Lactococcus lactis ssp. lactis IL1403.</title>
        <authorList>
            <person name="Bolotin A."/>
            <person name="Wincker P."/>
            <person name="Mauger S."/>
            <person name="Jaillon O."/>
            <person name="Malarme K."/>
            <person name="Weissenbach J."/>
            <person name="Ehrlich S.D."/>
            <person name="Sorokin A."/>
        </authorList>
    </citation>
    <scope>NUCLEOTIDE SEQUENCE [LARGE SCALE GENOMIC DNA]</scope>
    <source>
        <strain>IL1403</strain>
    </source>
</reference>